<dbReference type="EMBL" id="AM746676">
    <property type="protein sequence ID" value="CAN94705.1"/>
    <property type="molecule type" value="Genomic_DNA"/>
</dbReference>
<dbReference type="RefSeq" id="WP_012237174.1">
    <property type="nucleotide sequence ID" value="NC_010162.1"/>
</dbReference>
<dbReference type="SMR" id="A9F8Z6"/>
<dbReference type="STRING" id="448385.sce4542"/>
<dbReference type="KEGG" id="scl:sce4542"/>
<dbReference type="eggNOG" id="COG0184">
    <property type="taxonomic scope" value="Bacteria"/>
</dbReference>
<dbReference type="HOGENOM" id="CLU_148518_0_0_7"/>
<dbReference type="OrthoDB" id="9799262at2"/>
<dbReference type="BioCyc" id="SCEL448385:SCE_RS23310-MONOMER"/>
<dbReference type="Proteomes" id="UP000002139">
    <property type="component" value="Chromosome"/>
</dbReference>
<dbReference type="GO" id="GO:0022627">
    <property type="term" value="C:cytosolic small ribosomal subunit"/>
    <property type="evidence" value="ECO:0007669"/>
    <property type="project" value="TreeGrafter"/>
</dbReference>
<dbReference type="GO" id="GO:0019843">
    <property type="term" value="F:rRNA binding"/>
    <property type="evidence" value="ECO:0007669"/>
    <property type="project" value="UniProtKB-UniRule"/>
</dbReference>
<dbReference type="GO" id="GO:0003735">
    <property type="term" value="F:structural constituent of ribosome"/>
    <property type="evidence" value="ECO:0007669"/>
    <property type="project" value="InterPro"/>
</dbReference>
<dbReference type="GO" id="GO:0006412">
    <property type="term" value="P:translation"/>
    <property type="evidence" value="ECO:0007669"/>
    <property type="project" value="UniProtKB-UniRule"/>
</dbReference>
<dbReference type="CDD" id="cd00353">
    <property type="entry name" value="Ribosomal_S15p_S13e"/>
    <property type="match status" value="1"/>
</dbReference>
<dbReference type="FunFam" id="1.10.287.10:FF:000002">
    <property type="entry name" value="30S ribosomal protein S15"/>
    <property type="match status" value="1"/>
</dbReference>
<dbReference type="Gene3D" id="6.10.250.3130">
    <property type="match status" value="1"/>
</dbReference>
<dbReference type="Gene3D" id="1.10.287.10">
    <property type="entry name" value="S15/NS1, RNA-binding"/>
    <property type="match status" value="1"/>
</dbReference>
<dbReference type="HAMAP" id="MF_01343_B">
    <property type="entry name" value="Ribosomal_uS15_B"/>
    <property type="match status" value="1"/>
</dbReference>
<dbReference type="InterPro" id="IPR000589">
    <property type="entry name" value="Ribosomal_uS15"/>
</dbReference>
<dbReference type="InterPro" id="IPR005290">
    <property type="entry name" value="Ribosomal_uS15_bac-type"/>
</dbReference>
<dbReference type="InterPro" id="IPR009068">
    <property type="entry name" value="uS15_NS1_RNA-bd_sf"/>
</dbReference>
<dbReference type="NCBIfam" id="TIGR00952">
    <property type="entry name" value="S15_bact"/>
    <property type="match status" value="1"/>
</dbReference>
<dbReference type="PANTHER" id="PTHR23321">
    <property type="entry name" value="RIBOSOMAL PROTEIN S15, BACTERIAL AND ORGANELLAR"/>
    <property type="match status" value="1"/>
</dbReference>
<dbReference type="PANTHER" id="PTHR23321:SF26">
    <property type="entry name" value="SMALL RIBOSOMAL SUBUNIT PROTEIN US15M"/>
    <property type="match status" value="1"/>
</dbReference>
<dbReference type="Pfam" id="PF00312">
    <property type="entry name" value="Ribosomal_S15"/>
    <property type="match status" value="1"/>
</dbReference>
<dbReference type="SMART" id="SM01387">
    <property type="entry name" value="Ribosomal_S15"/>
    <property type="match status" value="1"/>
</dbReference>
<dbReference type="SUPFAM" id="SSF47060">
    <property type="entry name" value="S15/NS1 RNA-binding domain"/>
    <property type="match status" value="1"/>
</dbReference>
<name>RS15_SORC5</name>
<sequence length="88" mass="10609">MLHSVQKTDIIQKYAIHDGDTGSPEVQIALLSERINQLQEHFRTHQKDHHSRRGLLKLVSQRRRQLDYLKRVDIERYRSLINRLNLRK</sequence>
<gene>
    <name evidence="1" type="primary">rpsO</name>
    <name type="ordered locus">sce4542</name>
</gene>
<accession>A9F8Z6</accession>
<evidence type="ECO:0000255" key="1">
    <source>
        <dbReference type="HAMAP-Rule" id="MF_01343"/>
    </source>
</evidence>
<evidence type="ECO:0000305" key="2"/>
<protein>
    <recommendedName>
        <fullName evidence="1">Small ribosomal subunit protein uS15</fullName>
    </recommendedName>
    <alternativeName>
        <fullName evidence="2">30S ribosomal protein S15</fullName>
    </alternativeName>
</protein>
<reference key="1">
    <citation type="journal article" date="2007" name="Nat. Biotechnol.">
        <title>Complete genome sequence of the myxobacterium Sorangium cellulosum.</title>
        <authorList>
            <person name="Schneiker S."/>
            <person name="Perlova O."/>
            <person name="Kaiser O."/>
            <person name="Gerth K."/>
            <person name="Alici A."/>
            <person name="Altmeyer M.O."/>
            <person name="Bartels D."/>
            <person name="Bekel T."/>
            <person name="Beyer S."/>
            <person name="Bode E."/>
            <person name="Bode H.B."/>
            <person name="Bolten C.J."/>
            <person name="Choudhuri J.V."/>
            <person name="Doss S."/>
            <person name="Elnakady Y.A."/>
            <person name="Frank B."/>
            <person name="Gaigalat L."/>
            <person name="Goesmann A."/>
            <person name="Groeger C."/>
            <person name="Gross F."/>
            <person name="Jelsbak L."/>
            <person name="Jelsbak L."/>
            <person name="Kalinowski J."/>
            <person name="Kegler C."/>
            <person name="Knauber T."/>
            <person name="Konietzny S."/>
            <person name="Kopp M."/>
            <person name="Krause L."/>
            <person name="Krug D."/>
            <person name="Linke B."/>
            <person name="Mahmud T."/>
            <person name="Martinez-Arias R."/>
            <person name="McHardy A.C."/>
            <person name="Merai M."/>
            <person name="Meyer F."/>
            <person name="Mormann S."/>
            <person name="Munoz-Dorado J."/>
            <person name="Perez J."/>
            <person name="Pradella S."/>
            <person name="Rachid S."/>
            <person name="Raddatz G."/>
            <person name="Rosenau F."/>
            <person name="Rueckert C."/>
            <person name="Sasse F."/>
            <person name="Scharfe M."/>
            <person name="Schuster S.C."/>
            <person name="Suen G."/>
            <person name="Treuner-Lange A."/>
            <person name="Velicer G.J."/>
            <person name="Vorholter F.-J."/>
            <person name="Weissman K.J."/>
            <person name="Welch R.D."/>
            <person name="Wenzel S.C."/>
            <person name="Whitworth D.E."/>
            <person name="Wilhelm S."/>
            <person name="Wittmann C."/>
            <person name="Bloecker H."/>
            <person name="Puehler A."/>
            <person name="Mueller R."/>
        </authorList>
    </citation>
    <scope>NUCLEOTIDE SEQUENCE [LARGE SCALE GENOMIC DNA]</scope>
    <source>
        <strain>So ce56</strain>
    </source>
</reference>
<comment type="function">
    <text evidence="1">One of the primary rRNA binding proteins, it binds directly to 16S rRNA where it helps nucleate assembly of the platform of the 30S subunit by binding and bridging several RNA helices of the 16S rRNA.</text>
</comment>
<comment type="function">
    <text evidence="1">Forms an intersubunit bridge (bridge B4) with the 23S rRNA of the 50S subunit in the ribosome.</text>
</comment>
<comment type="subunit">
    <text evidence="1">Part of the 30S ribosomal subunit. Forms a bridge to the 50S subunit in the 70S ribosome, contacting the 23S rRNA.</text>
</comment>
<comment type="similarity">
    <text evidence="1">Belongs to the universal ribosomal protein uS15 family.</text>
</comment>
<feature type="chain" id="PRO_1000086822" description="Small ribosomal subunit protein uS15">
    <location>
        <begin position="1"/>
        <end position="88"/>
    </location>
</feature>
<proteinExistence type="inferred from homology"/>
<organism>
    <name type="scientific">Sorangium cellulosum (strain So ce56)</name>
    <name type="common">Polyangium cellulosum (strain So ce56)</name>
    <dbReference type="NCBI Taxonomy" id="448385"/>
    <lineage>
        <taxon>Bacteria</taxon>
        <taxon>Pseudomonadati</taxon>
        <taxon>Myxococcota</taxon>
        <taxon>Polyangia</taxon>
        <taxon>Polyangiales</taxon>
        <taxon>Polyangiaceae</taxon>
        <taxon>Sorangium</taxon>
    </lineage>
</organism>
<keyword id="KW-1185">Reference proteome</keyword>
<keyword id="KW-0687">Ribonucleoprotein</keyword>
<keyword id="KW-0689">Ribosomal protein</keyword>
<keyword id="KW-0694">RNA-binding</keyword>
<keyword id="KW-0699">rRNA-binding</keyword>